<name>O161_CONST</name>
<protein>
    <recommendedName>
        <fullName>Omega-conotoxin-like SVIA mutant 1</fullName>
    </recommendedName>
</protein>
<organism>
    <name type="scientific">Conus striatus</name>
    <name type="common">Striated cone</name>
    <dbReference type="NCBI Taxonomy" id="6493"/>
    <lineage>
        <taxon>Eukaryota</taxon>
        <taxon>Metazoa</taxon>
        <taxon>Spiralia</taxon>
        <taxon>Lophotrochozoa</taxon>
        <taxon>Mollusca</taxon>
        <taxon>Gastropoda</taxon>
        <taxon>Caenogastropoda</taxon>
        <taxon>Neogastropoda</taxon>
        <taxon>Conoidea</taxon>
        <taxon>Conidae</taxon>
        <taxon>Conus</taxon>
        <taxon>Pionoconus</taxon>
    </lineage>
</organism>
<reference key="1">
    <citation type="journal article" date="1999" name="Peptides">
        <title>Conopeptides from Conus striatus and Conus textile by cDNA cloning.</title>
        <authorList>
            <person name="Lu B.-S."/>
            <person name="Yu F."/>
            <person name="Zhao D."/>
            <person name="Huang P.-T."/>
            <person name="Huang C.-F."/>
        </authorList>
    </citation>
    <scope>NUCLEOTIDE SEQUENCE [MRNA]</scope>
    <source>
        <tissue>Venom duct</tissue>
    </source>
</reference>
<accession>Q9XZL4</accession>
<keyword id="KW-0108">Calcium channel impairing toxin</keyword>
<keyword id="KW-1015">Disulfide bond</keyword>
<keyword id="KW-0379">Hydroxylation</keyword>
<keyword id="KW-0872">Ion channel impairing toxin</keyword>
<keyword id="KW-0960">Knottin</keyword>
<keyword id="KW-0528">Neurotoxin</keyword>
<keyword id="KW-0638">Presynaptic neurotoxin</keyword>
<keyword id="KW-0964">Secreted</keyword>
<keyword id="KW-0732">Signal</keyword>
<keyword id="KW-0800">Toxin</keyword>
<keyword id="KW-1218">Voltage-gated calcium channel impairing toxin</keyword>
<evidence type="ECO:0000250" key="1"/>
<evidence type="ECO:0000255" key="2"/>
<evidence type="ECO:0000305" key="3"/>
<comment type="function">
    <text evidence="1">Omega-conotoxins act at presynaptic membranes, they bind and block voltage-gated calcium channels (Cav).</text>
</comment>
<comment type="subcellular location">
    <subcellularLocation>
        <location>Secreted</location>
    </subcellularLocation>
</comment>
<comment type="tissue specificity">
    <text>Expressed by the venom duct.</text>
</comment>
<comment type="domain">
    <text evidence="1">The presence of a 'disulfide through disulfide knot' structurally defines this protein as a knottin.</text>
</comment>
<comment type="domain">
    <text>The cysteine framework is VI/VII (C-C-CC-C-C).</text>
</comment>
<comment type="similarity">
    <text evidence="3">Belongs to the conotoxin O1 superfamily.</text>
</comment>
<feature type="signal peptide" evidence="2">
    <location>
        <begin position="1"/>
        <end position="22"/>
    </location>
</feature>
<feature type="propeptide" id="PRO_0000034928" evidence="1">
    <location>
        <begin position="23"/>
        <end position="48"/>
    </location>
</feature>
<feature type="peptide" id="PRO_0000034929" description="Omega-conotoxin-like SVIA mutant 1">
    <location>
        <begin position="49"/>
        <end position="72"/>
    </location>
</feature>
<feature type="modified residue" description="4-hydroxyproline" evidence="1">
    <location>
        <position position="55"/>
    </location>
</feature>
<feature type="disulfide bond" evidence="1">
    <location>
        <begin position="49"/>
        <end position="63"/>
    </location>
</feature>
<feature type="disulfide bond" evidence="1">
    <location>
        <begin position="56"/>
        <end position="66"/>
    </location>
</feature>
<feature type="disulfide bond" evidence="1">
    <location>
        <begin position="62"/>
        <end position="71"/>
    </location>
</feature>
<dbReference type="EMBL" id="AF146360">
    <property type="protein sequence ID" value="AAD31920.1"/>
    <property type="molecule type" value="mRNA"/>
</dbReference>
<dbReference type="SMR" id="Q9XZL4"/>
<dbReference type="ConoServer" id="874">
    <property type="toxin name" value="SVIA mutant 1 precursor"/>
</dbReference>
<dbReference type="GO" id="GO:0005576">
    <property type="term" value="C:extracellular region"/>
    <property type="evidence" value="ECO:0007669"/>
    <property type="project" value="UniProtKB-SubCell"/>
</dbReference>
<dbReference type="GO" id="GO:0044231">
    <property type="term" value="C:host cell presynaptic membrane"/>
    <property type="evidence" value="ECO:0007669"/>
    <property type="project" value="UniProtKB-KW"/>
</dbReference>
<dbReference type="GO" id="GO:0005246">
    <property type="term" value="F:calcium channel regulator activity"/>
    <property type="evidence" value="ECO:0007669"/>
    <property type="project" value="UniProtKB-KW"/>
</dbReference>
<dbReference type="GO" id="GO:0008200">
    <property type="term" value="F:ion channel inhibitor activity"/>
    <property type="evidence" value="ECO:0007669"/>
    <property type="project" value="InterPro"/>
</dbReference>
<dbReference type="GO" id="GO:0090729">
    <property type="term" value="F:toxin activity"/>
    <property type="evidence" value="ECO:0007669"/>
    <property type="project" value="UniProtKB-KW"/>
</dbReference>
<dbReference type="InterPro" id="IPR004214">
    <property type="entry name" value="Conotoxin"/>
</dbReference>
<dbReference type="InterPro" id="IPR012321">
    <property type="entry name" value="Conotoxin_omega-typ_CS"/>
</dbReference>
<dbReference type="Pfam" id="PF02950">
    <property type="entry name" value="Conotoxin"/>
    <property type="match status" value="1"/>
</dbReference>
<dbReference type="PROSITE" id="PS60004">
    <property type="entry name" value="OMEGA_CONOTOXIN"/>
    <property type="match status" value="1"/>
</dbReference>
<proteinExistence type="evidence at transcript level"/>
<sequence length="72" mass="7804">MKLTCVVIVAVLLLTACQLITAEDSRGAQKHRTLRSTARRSKSELTTRCRPSGSPCGVTSICCGRCYRGKCT</sequence>